<comment type="function">
    <text evidence="1">Required for gamma-tubulin complex recruitment to the microtubule organizing center (MTOC).</text>
</comment>
<comment type="subunit">
    <text evidence="1">Part of the gamma-tubulin complex.</text>
</comment>
<comment type="subcellular location">
    <subcellularLocation>
        <location evidence="1">Cytoplasm</location>
        <location evidence="1">Cytoskeleton</location>
        <location evidence="1">Microtubule organizing center</location>
        <location evidence="1">Spindle pole body</location>
    </subcellularLocation>
</comment>
<comment type="similarity">
    <text evidence="2">Belongs to the MOZART1 family.</text>
</comment>
<protein>
    <recommendedName>
        <fullName>Mitotic-spindle organizing protein 1</fullName>
    </recommendedName>
    <alternativeName>
        <fullName>Mitotic-spindle organizing protein associated with a ring of gamma-tubulin 1</fullName>
    </alternativeName>
</protein>
<evidence type="ECO:0000250" key="1"/>
<evidence type="ECO:0000305" key="2"/>
<sequence length="72" mass="7784">MSSTQDEAILRNARETIDSLYDLSQLLQTGLDKSTLSICVGMIEQGANPDTLAAVIKELRSENEALNSQSNA</sequence>
<feature type="chain" id="PRO_0000365083" description="Mitotic-spindle organizing protein 1">
    <location>
        <begin position="1"/>
        <end position="72"/>
    </location>
</feature>
<reference key="1">
    <citation type="journal article" date="2005" name="Science">
        <title>The genome of the basidiomycetous yeast and human pathogen Cryptococcus neoformans.</title>
        <authorList>
            <person name="Loftus B.J."/>
            <person name="Fung E."/>
            <person name="Roncaglia P."/>
            <person name="Rowley D."/>
            <person name="Amedeo P."/>
            <person name="Bruno D."/>
            <person name="Vamathevan J."/>
            <person name="Miranda M."/>
            <person name="Anderson I.J."/>
            <person name="Fraser J.A."/>
            <person name="Allen J.E."/>
            <person name="Bosdet I.E."/>
            <person name="Brent M.R."/>
            <person name="Chiu R."/>
            <person name="Doering T.L."/>
            <person name="Donlin M.J."/>
            <person name="D'Souza C.A."/>
            <person name="Fox D.S."/>
            <person name="Grinberg V."/>
            <person name="Fu J."/>
            <person name="Fukushima M."/>
            <person name="Haas B.J."/>
            <person name="Huang J.C."/>
            <person name="Janbon G."/>
            <person name="Jones S.J.M."/>
            <person name="Koo H.L."/>
            <person name="Krzywinski M.I."/>
            <person name="Kwon-Chung K.J."/>
            <person name="Lengeler K.B."/>
            <person name="Maiti R."/>
            <person name="Marra M.A."/>
            <person name="Marra R.E."/>
            <person name="Mathewson C.A."/>
            <person name="Mitchell T.G."/>
            <person name="Pertea M."/>
            <person name="Riggs F.R."/>
            <person name="Salzberg S.L."/>
            <person name="Schein J.E."/>
            <person name="Shvartsbeyn A."/>
            <person name="Shin H."/>
            <person name="Shumway M."/>
            <person name="Specht C.A."/>
            <person name="Suh B.B."/>
            <person name="Tenney A."/>
            <person name="Utterback T.R."/>
            <person name="Wickes B.L."/>
            <person name="Wortman J.R."/>
            <person name="Wye N.H."/>
            <person name="Kronstad J.W."/>
            <person name="Lodge J.K."/>
            <person name="Heitman J."/>
            <person name="Davis R.W."/>
            <person name="Fraser C.M."/>
            <person name="Hyman R.W."/>
        </authorList>
    </citation>
    <scope>NUCLEOTIDE SEQUENCE [LARGE SCALE GENOMIC DNA]</scope>
    <source>
        <strain>JEC21 / ATCC MYA-565</strain>
    </source>
</reference>
<dbReference type="EMBL" id="AE017341">
    <property type="protein sequence ID" value="AAW40722.1"/>
    <property type="molecule type" value="Genomic_DNA"/>
</dbReference>
<dbReference type="RefSeq" id="XP_566541.1">
    <property type="nucleotide sequence ID" value="XM_566541.2"/>
</dbReference>
<dbReference type="SMR" id="P0CP04"/>
<dbReference type="FunCoup" id="P0CP04">
    <property type="interactions" value="118"/>
</dbReference>
<dbReference type="STRING" id="214684.P0CP04"/>
<dbReference type="PaxDb" id="214684-P0CP04"/>
<dbReference type="EnsemblFungi" id="AAW40722">
    <property type="protein sequence ID" value="AAW40722"/>
    <property type="gene ID" value="CNA01750"/>
</dbReference>
<dbReference type="GeneID" id="3253988"/>
<dbReference type="KEGG" id="cne:CNA01750"/>
<dbReference type="VEuPathDB" id="FungiDB:CNA01750"/>
<dbReference type="eggNOG" id="ENOG502S6UI">
    <property type="taxonomic scope" value="Eukaryota"/>
</dbReference>
<dbReference type="HOGENOM" id="CLU_160285_0_1_1"/>
<dbReference type="InParanoid" id="P0CP04"/>
<dbReference type="OMA" id="LSICVGM"/>
<dbReference type="OrthoDB" id="48571at2759"/>
<dbReference type="Proteomes" id="UP000002149">
    <property type="component" value="Chromosome 1"/>
</dbReference>
<dbReference type="GO" id="GO:0005737">
    <property type="term" value="C:cytoplasm"/>
    <property type="evidence" value="ECO:0007669"/>
    <property type="project" value="UniProtKB-KW"/>
</dbReference>
<dbReference type="GO" id="GO:0000930">
    <property type="term" value="C:gamma-tubulin complex"/>
    <property type="evidence" value="ECO:0000318"/>
    <property type="project" value="GO_Central"/>
</dbReference>
<dbReference type="GO" id="GO:0000931">
    <property type="term" value="C:gamma-tubulin ring complex"/>
    <property type="evidence" value="ECO:0007669"/>
    <property type="project" value="InterPro"/>
</dbReference>
<dbReference type="GO" id="GO:0031021">
    <property type="term" value="C:interphase microtubule organizing center"/>
    <property type="evidence" value="ECO:0000318"/>
    <property type="project" value="GO_Central"/>
</dbReference>
<dbReference type="GO" id="GO:0044732">
    <property type="term" value="C:mitotic spindle pole body"/>
    <property type="evidence" value="ECO:0000318"/>
    <property type="project" value="GO_Central"/>
</dbReference>
<dbReference type="GO" id="GO:0005819">
    <property type="term" value="C:spindle"/>
    <property type="evidence" value="ECO:0000318"/>
    <property type="project" value="GO_Central"/>
</dbReference>
<dbReference type="GO" id="GO:0033566">
    <property type="term" value="P:gamma-tubulin complex localization"/>
    <property type="evidence" value="ECO:0007669"/>
    <property type="project" value="InterPro"/>
</dbReference>
<dbReference type="GO" id="GO:0051415">
    <property type="term" value="P:microtubule nucleation by interphase microtubule organizing center"/>
    <property type="evidence" value="ECO:0000318"/>
    <property type="project" value="GO_Central"/>
</dbReference>
<dbReference type="GO" id="GO:0090307">
    <property type="term" value="P:mitotic spindle assembly"/>
    <property type="evidence" value="ECO:0000318"/>
    <property type="project" value="GO_Central"/>
</dbReference>
<dbReference type="InterPro" id="IPR022214">
    <property type="entry name" value="MZT1"/>
</dbReference>
<dbReference type="PANTHER" id="PTHR28520">
    <property type="entry name" value="MITOTIC-SPINDLE ORGANIZING PROTEIN 1"/>
    <property type="match status" value="1"/>
</dbReference>
<dbReference type="PANTHER" id="PTHR28520:SF2">
    <property type="entry name" value="MITOTIC-SPINDLE ORGANIZING PROTEIN 1"/>
    <property type="match status" value="1"/>
</dbReference>
<dbReference type="Pfam" id="PF12554">
    <property type="entry name" value="MOZART1"/>
    <property type="match status" value="1"/>
</dbReference>
<keyword id="KW-0963">Cytoplasm</keyword>
<keyword id="KW-0206">Cytoskeleton</keyword>
<keyword id="KW-1185">Reference proteome</keyword>
<accession>P0CP04</accession>
<accession>Q560S2</accession>
<accession>Q5KPS1</accession>
<name>MZT1_CRYNJ</name>
<proteinExistence type="inferred from homology"/>
<organism>
    <name type="scientific">Cryptococcus neoformans var. neoformans serotype D (strain JEC21 / ATCC MYA-565)</name>
    <name type="common">Filobasidiella neoformans</name>
    <dbReference type="NCBI Taxonomy" id="214684"/>
    <lineage>
        <taxon>Eukaryota</taxon>
        <taxon>Fungi</taxon>
        <taxon>Dikarya</taxon>
        <taxon>Basidiomycota</taxon>
        <taxon>Agaricomycotina</taxon>
        <taxon>Tremellomycetes</taxon>
        <taxon>Tremellales</taxon>
        <taxon>Cryptococcaceae</taxon>
        <taxon>Cryptococcus</taxon>
        <taxon>Cryptococcus neoformans species complex</taxon>
    </lineage>
</organism>
<gene>
    <name type="ordered locus">CNA01750</name>
</gene>